<gene>
    <name evidence="1" type="primary">lipA</name>
    <name type="ordered locus">SE_0617</name>
</gene>
<organism>
    <name type="scientific">Staphylococcus epidermidis (strain ATCC 12228 / FDA PCI 1200)</name>
    <dbReference type="NCBI Taxonomy" id="176280"/>
    <lineage>
        <taxon>Bacteria</taxon>
        <taxon>Bacillati</taxon>
        <taxon>Bacillota</taxon>
        <taxon>Bacilli</taxon>
        <taxon>Bacillales</taxon>
        <taxon>Staphylococcaceae</taxon>
        <taxon>Staphylococcus</taxon>
    </lineage>
</organism>
<keyword id="KW-0004">4Fe-4S</keyword>
<keyword id="KW-0963">Cytoplasm</keyword>
<keyword id="KW-0408">Iron</keyword>
<keyword id="KW-0411">Iron-sulfur</keyword>
<keyword id="KW-0479">Metal-binding</keyword>
<keyword id="KW-0949">S-adenosyl-L-methionine</keyword>
<keyword id="KW-0808">Transferase</keyword>
<feature type="chain" id="PRO_0000102363" description="Lipoyl synthase">
    <location>
        <begin position="1"/>
        <end position="304"/>
    </location>
</feature>
<feature type="domain" description="Radical SAM core" evidence="2">
    <location>
        <begin position="54"/>
        <end position="270"/>
    </location>
</feature>
<feature type="region of interest" description="Disordered" evidence="3">
    <location>
        <begin position="282"/>
        <end position="304"/>
    </location>
</feature>
<feature type="binding site" evidence="1">
    <location>
        <position position="41"/>
    </location>
    <ligand>
        <name>[4Fe-4S] cluster</name>
        <dbReference type="ChEBI" id="CHEBI:49883"/>
        <label>1</label>
    </ligand>
</feature>
<feature type="binding site" evidence="1">
    <location>
        <position position="46"/>
    </location>
    <ligand>
        <name>[4Fe-4S] cluster</name>
        <dbReference type="ChEBI" id="CHEBI:49883"/>
        <label>1</label>
    </ligand>
</feature>
<feature type="binding site" evidence="1">
    <location>
        <position position="52"/>
    </location>
    <ligand>
        <name>[4Fe-4S] cluster</name>
        <dbReference type="ChEBI" id="CHEBI:49883"/>
        <label>1</label>
    </ligand>
</feature>
<feature type="binding site" evidence="1">
    <location>
        <position position="68"/>
    </location>
    <ligand>
        <name>[4Fe-4S] cluster</name>
        <dbReference type="ChEBI" id="CHEBI:49883"/>
        <label>2</label>
        <note>4Fe-4S-S-AdoMet</note>
    </ligand>
</feature>
<feature type="binding site" evidence="1">
    <location>
        <position position="72"/>
    </location>
    <ligand>
        <name>[4Fe-4S] cluster</name>
        <dbReference type="ChEBI" id="CHEBI:49883"/>
        <label>2</label>
        <note>4Fe-4S-S-AdoMet</note>
    </ligand>
</feature>
<feature type="binding site" evidence="1">
    <location>
        <position position="75"/>
    </location>
    <ligand>
        <name>[4Fe-4S] cluster</name>
        <dbReference type="ChEBI" id="CHEBI:49883"/>
        <label>2</label>
        <note>4Fe-4S-S-AdoMet</note>
    </ligand>
</feature>
<feature type="binding site" evidence="1">
    <location>
        <position position="281"/>
    </location>
    <ligand>
        <name>[4Fe-4S] cluster</name>
        <dbReference type="ChEBI" id="CHEBI:49883"/>
        <label>1</label>
    </ligand>
</feature>
<dbReference type="EC" id="2.8.1.8" evidence="1"/>
<dbReference type="EMBL" id="AE015929">
    <property type="protein sequence ID" value="AAO04214.1"/>
    <property type="molecule type" value="Genomic_DNA"/>
</dbReference>
<dbReference type="RefSeq" id="NP_764172.1">
    <property type="nucleotide sequence ID" value="NC_004461.1"/>
</dbReference>
<dbReference type="RefSeq" id="WP_001831979.1">
    <property type="nucleotide sequence ID" value="NZ_WBME01000029.1"/>
</dbReference>
<dbReference type="SMR" id="Q8CPW4"/>
<dbReference type="GeneID" id="50019235"/>
<dbReference type="KEGG" id="sep:SE_0617"/>
<dbReference type="PATRIC" id="fig|176280.10.peg.589"/>
<dbReference type="eggNOG" id="COG0320">
    <property type="taxonomic scope" value="Bacteria"/>
</dbReference>
<dbReference type="HOGENOM" id="CLU_033144_2_1_9"/>
<dbReference type="OrthoDB" id="9787898at2"/>
<dbReference type="Proteomes" id="UP000001411">
    <property type="component" value="Chromosome"/>
</dbReference>
<dbReference type="GO" id="GO:0005737">
    <property type="term" value="C:cytoplasm"/>
    <property type="evidence" value="ECO:0007669"/>
    <property type="project" value="UniProtKB-SubCell"/>
</dbReference>
<dbReference type="GO" id="GO:0051539">
    <property type="term" value="F:4 iron, 4 sulfur cluster binding"/>
    <property type="evidence" value="ECO:0007669"/>
    <property type="project" value="UniProtKB-UniRule"/>
</dbReference>
<dbReference type="GO" id="GO:0016992">
    <property type="term" value="F:lipoate synthase activity"/>
    <property type="evidence" value="ECO:0007669"/>
    <property type="project" value="UniProtKB-UniRule"/>
</dbReference>
<dbReference type="GO" id="GO:0046872">
    <property type="term" value="F:metal ion binding"/>
    <property type="evidence" value="ECO:0007669"/>
    <property type="project" value="UniProtKB-KW"/>
</dbReference>
<dbReference type="CDD" id="cd01335">
    <property type="entry name" value="Radical_SAM"/>
    <property type="match status" value="1"/>
</dbReference>
<dbReference type="FunFam" id="3.20.20.70:FF:000040">
    <property type="entry name" value="Lipoyl synthase"/>
    <property type="match status" value="1"/>
</dbReference>
<dbReference type="Gene3D" id="3.20.20.70">
    <property type="entry name" value="Aldolase class I"/>
    <property type="match status" value="1"/>
</dbReference>
<dbReference type="HAMAP" id="MF_00206">
    <property type="entry name" value="Lipoyl_synth"/>
    <property type="match status" value="1"/>
</dbReference>
<dbReference type="InterPro" id="IPR013785">
    <property type="entry name" value="Aldolase_TIM"/>
</dbReference>
<dbReference type="InterPro" id="IPR006638">
    <property type="entry name" value="Elp3/MiaA/NifB-like_rSAM"/>
</dbReference>
<dbReference type="InterPro" id="IPR031691">
    <property type="entry name" value="LIAS_N"/>
</dbReference>
<dbReference type="InterPro" id="IPR003698">
    <property type="entry name" value="Lipoyl_synth"/>
</dbReference>
<dbReference type="InterPro" id="IPR007197">
    <property type="entry name" value="rSAM"/>
</dbReference>
<dbReference type="NCBIfam" id="TIGR00510">
    <property type="entry name" value="lipA"/>
    <property type="match status" value="1"/>
</dbReference>
<dbReference type="NCBIfam" id="NF004019">
    <property type="entry name" value="PRK05481.1"/>
    <property type="match status" value="1"/>
</dbReference>
<dbReference type="NCBIfam" id="NF009544">
    <property type="entry name" value="PRK12928.1"/>
    <property type="match status" value="1"/>
</dbReference>
<dbReference type="PANTHER" id="PTHR10949">
    <property type="entry name" value="LIPOYL SYNTHASE"/>
    <property type="match status" value="1"/>
</dbReference>
<dbReference type="PANTHER" id="PTHR10949:SF0">
    <property type="entry name" value="LIPOYL SYNTHASE, MITOCHONDRIAL"/>
    <property type="match status" value="1"/>
</dbReference>
<dbReference type="Pfam" id="PF16881">
    <property type="entry name" value="LIAS_N"/>
    <property type="match status" value="1"/>
</dbReference>
<dbReference type="Pfam" id="PF04055">
    <property type="entry name" value="Radical_SAM"/>
    <property type="match status" value="1"/>
</dbReference>
<dbReference type="PIRSF" id="PIRSF005963">
    <property type="entry name" value="Lipoyl_synth"/>
    <property type="match status" value="1"/>
</dbReference>
<dbReference type="SFLD" id="SFLDF00271">
    <property type="entry name" value="lipoyl_synthase"/>
    <property type="match status" value="1"/>
</dbReference>
<dbReference type="SFLD" id="SFLDG01058">
    <property type="entry name" value="lipoyl_synthase_like"/>
    <property type="match status" value="1"/>
</dbReference>
<dbReference type="SMART" id="SM00729">
    <property type="entry name" value="Elp3"/>
    <property type="match status" value="1"/>
</dbReference>
<dbReference type="SUPFAM" id="SSF102114">
    <property type="entry name" value="Radical SAM enzymes"/>
    <property type="match status" value="1"/>
</dbReference>
<dbReference type="PROSITE" id="PS51918">
    <property type="entry name" value="RADICAL_SAM"/>
    <property type="match status" value="1"/>
</dbReference>
<comment type="function">
    <text evidence="1">Catalyzes the radical-mediated insertion of two sulfur atoms into the C-6 and C-8 positions of the octanoyl moiety bound to the lipoyl domains of lipoate-dependent enzymes, thereby converting the octanoylated domains into lipoylated derivatives.</text>
</comment>
<comment type="catalytic activity">
    <reaction evidence="1">
        <text>[[Fe-S] cluster scaffold protein carrying a second [4Fe-4S](2+) cluster] + N(6)-octanoyl-L-lysyl-[protein] + 2 oxidized [2Fe-2S]-[ferredoxin] + 2 S-adenosyl-L-methionine + 4 H(+) = [[Fe-S] cluster scaffold protein] + N(6)-[(R)-dihydrolipoyl]-L-lysyl-[protein] + 4 Fe(3+) + 2 hydrogen sulfide + 2 5'-deoxyadenosine + 2 L-methionine + 2 reduced [2Fe-2S]-[ferredoxin]</text>
        <dbReference type="Rhea" id="RHEA:16585"/>
        <dbReference type="Rhea" id="RHEA-COMP:9928"/>
        <dbReference type="Rhea" id="RHEA-COMP:10000"/>
        <dbReference type="Rhea" id="RHEA-COMP:10001"/>
        <dbReference type="Rhea" id="RHEA-COMP:10475"/>
        <dbReference type="Rhea" id="RHEA-COMP:14568"/>
        <dbReference type="Rhea" id="RHEA-COMP:14569"/>
        <dbReference type="ChEBI" id="CHEBI:15378"/>
        <dbReference type="ChEBI" id="CHEBI:17319"/>
        <dbReference type="ChEBI" id="CHEBI:29034"/>
        <dbReference type="ChEBI" id="CHEBI:29919"/>
        <dbReference type="ChEBI" id="CHEBI:33722"/>
        <dbReference type="ChEBI" id="CHEBI:33737"/>
        <dbReference type="ChEBI" id="CHEBI:33738"/>
        <dbReference type="ChEBI" id="CHEBI:57844"/>
        <dbReference type="ChEBI" id="CHEBI:59789"/>
        <dbReference type="ChEBI" id="CHEBI:78809"/>
        <dbReference type="ChEBI" id="CHEBI:83100"/>
        <dbReference type="EC" id="2.8.1.8"/>
    </reaction>
</comment>
<comment type="cofactor">
    <cofactor evidence="1">
        <name>[4Fe-4S] cluster</name>
        <dbReference type="ChEBI" id="CHEBI:49883"/>
    </cofactor>
    <text evidence="1">Binds 2 [4Fe-4S] clusters per subunit. One cluster is coordinated with 3 cysteines and an exchangeable S-adenosyl-L-methionine.</text>
</comment>
<comment type="pathway">
    <text evidence="1">Protein modification; protein lipoylation via endogenous pathway; protein N(6)-(lipoyl)lysine from octanoyl-[acyl-carrier-protein].</text>
</comment>
<comment type="subcellular location">
    <subcellularLocation>
        <location evidence="1">Cytoplasm</location>
    </subcellularLocation>
</comment>
<comment type="similarity">
    <text evidence="1">Belongs to the radical SAM superfamily. Lipoyl synthase family.</text>
</comment>
<proteinExistence type="inferred from homology"/>
<evidence type="ECO:0000255" key="1">
    <source>
        <dbReference type="HAMAP-Rule" id="MF_00206"/>
    </source>
</evidence>
<evidence type="ECO:0000255" key="2">
    <source>
        <dbReference type="PROSITE-ProRule" id="PRU01266"/>
    </source>
</evidence>
<evidence type="ECO:0000256" key="3">
    <source>
        <dbReference type="SAM" id="MobiDB-lite"/>
    </source>
</evidence>
<name>LIPA_STAES</name>
<sequence length="304" mass="35028">MATRNEEILRKPDWLKIKLNTNDNYTGLKKMMREKNLHTVCEEAKCPNIHECWGARRTATFMILGAVCTRACRFCAVKTGLPNELDLNEPERVAESVELMNLKHVVITAVARDDLRDQGSNVYAETVRKVRERNPFTTIEILPSDMGGDYEALETLMASRPDILNHNIETVRRLTPRVRARATYDRTLQFLRRSKELQPDIPTKSSLMVGLGETMEEIYETMDDLRANDVDILTIGQYLQPSRKHLKVEKYYTPLEFGKMRKIAMEKGFKHCQAGPLVRSSYHADEQVNEAAKEKQRQGEEQLN</sequence>
<protein>
    <recommendedName>
        <fullName evidence="1">Lipoyl synthase</fullName>
        <ecNumber evidence="1">2.8.1.8</ecNumber>
    </recommendedName>
    <alternativeName>
        <fullName evidence="1">Lip-syn</fullName>
        <shortName evidence="1">LS</shortName>
    </alternativeName>
    <alternativeName>
        <fullName evidence="1">Lipoate synthase</fullName>
    </alternativeName>
    <alternativeName>
        <fullName evidence="1">Lipoic acid synthase</fullName>
    </alternativeName>
    <alternativeName>
        <fullName evidence="1">Sulfur insertion protein LipA</fullName>
    </alternativeName>
</protein>
<reference key="1">
    <citation type="journal article" date="2003" name="Mol. Microbiol.">
        <title>Genome-based analysis of virulence genes in a non-biofilm-forming Staphylococcus epidermidis strain (ATCC 12228).</title>
        <authorList>
            <person name="Zhang Y.-Q."/>
            <person name="Ren S.-X."/>
            <person name="Li H.-L."/>
            <person name="Wang Y.-X."/>
            <person name="Fu G."/>
            <person name="Yang J."/>
            <person name="Qin Z.-Q."/>
            <person name="Miao Y.-G."/>
            <person name="Wang W.-Y."/>
            <person name="Chen R.-S."/>
            <person name="Shen Y."/>
            <person name="Chen Z."/>
            <person name="Yuan Z.-H."/>
            <person name="Zhao G.-P."/>
            <person name="Qu D."/>
            <person name="Danchin A."/>
            <person name="Wen Y.-M."/>
        </authorList>
    </citation>
    <scope>NUCLEOTIDE SEQUENCE [LARGE SCALE GENOMIC DNA]</scope>
    <source>
        <strain>ATCC 12228 / FDA PCI 1200</strain>
    </source>
</reference>
<accession>Q8CPW4</accession>